<organism>
    <name type="scientific">Saccharomyces cerevisiae (strain ATCC 204508 / S288c)</name>
    <name type="common">Baker's yeast</name>
    <dbReference type="NCBI Taxonomy" id="559292"/>
    <lineage>
        <taxon>Eukaryota</taxon>
        <taxon>Fungi</taxon>
        <taxon>Dikarya</taxon>
        <taxon>Ascomycota</taxon>
        <taxon>Saccharomycotina</taxon>
        <taxon>Saccharomycetes</taxon>
        <taxon>Saccharomycetales</taxon>
        <taxon>Saccharomycetaceae</taxon>
        <taxon>Saccharomyces</taxon>
    </lineage>
</organism>
<keyword id="KW-1003">Cell membrane</keyword>
<keyword id="KW-0256">Endoplasmic reticulum</keyword>
<keyword id="KW-0325">Glycoprotein</keyword>
<keyword id="KW-0472">Membrane</keyword>
<keyword id="KW-0496">Mitochondrion</keyword>
<keyword id="KW-1185">Reference proteome</keyword>
<keyword id="KW-0735">Signal-anchor</keyword>
<keyword id="KW-0812">Transmembrane</keyword>
<keyword id="KW-1133">Transmembrane helix</keyword>
<reference key="1">
    <citation type="journal article" date="1997" name="Nature">
        <title>The nucleotide sequence of Saccharomyces cerevisiae chromosome XII.</title>
        <authorList>
            <person name="Johnston M."/>
            <person name="Hillier L.W."/>
            <person name="Riles L."/>
            <person name="Albermann K."/>
            <person name="Andre B."/>
            <person name="Ansorge W."/>
            <person name="Benes V."/>
            <person name="Brueckner M."/>
            <person name="Delius H."/>
            <person name="Dubois E."/>
            <person name="Duesterhoeft A."/>
            <person name="Entian K.-D."/>
            <person name="Floeth M."/>
            <person name="Goffeau A."/>
            <person name="Hebling U."/>
            <person name="Heumann K."/>
            <person name="Heuss-Neitzel D."/>
            <person name="Hilbert H."/>
            <person name="Hilger F."/>
            <person name="Kleine K."/>
            <person name="Koetter P."/>
            <person name="Louis E.J."/>
            <person name="Messenguy F."/>
            <person name="Mewes H.-W."/>
            <person name="Miosga T."/>
            <person name="Moestl D."/>
            <person name="Mueller-Auer S."/>
            <person name="Nentwich U."/>
            <person name="Obermaier B."/>
            <person name="Piravandi E."/>
            <person name="Pohl T.M."/>
            <person name="Portetelle D."/>
            <person name="Purnelle B."/>
            <person name="Rechmann S."/>
            <person name="Rieger M."/>
            <person name="Rinke M."/>
            <person name="Rose M."/>
            <person name="Scharfe M."/>
            <person name="Scherens B."/>
            <person name="Scholler P."/>
            <person name="Schwager C."/>
            <person name="Schwarz S."/>
            <person name="Underwood A.P."/>
            <person name="Urrestarazu L.A."/>
            <person name="Vandenbol M."/>
            <person name="Verhasselt P."/>
            <person name="Vierendeels F."/>
            <person name="Voet M."/>
            <person name="Volckaert G."/>
            <person name="Voss H."/>
            <person name="Wambutt R."/>
            <person name="Wedler E."/>
            <person name="Wedler H."/>
            <person name="Zimmermann F.K."/>
            <person name="Zollner A."/>
            <person name="Hani J."/>
            <person name="Hoheisel J.D."/>
        </authorList>
    </citation>
    <scope>NUCLEOTIDE SEQUENCE [LARGE SCALE GENOMIC DNA]</scope>
    <source>
        <strain>ATCC 204508 / S288c</strain>
    </source>
</reference>
<reference key="2">
    <citation type="journal article" date="2014" name="G3 (Bethesda)">
        <title>The reference genome sequence of Saccharomyces cerevisiae: Then and now.</title>
        <authorList>
            <person name="Engel S.R."/>
            <person name="Dietrich F.S."/>
            <person name="Fisk D.G."/>
            <person name="Binkley G."/>
            <person name="Balakrishnan R."/>
            <person name="Costanzo M.C."/>
            <person name="Dwight S.S."/>
            <person name="Hitz B.C."/>
            <person name="Karra K."/>
            <person name="Nash R.S."/>
            <person name="Weng S."/>
            <person name="Wong E.D."/>
            <person name="Lloyd P."/>
            <person name="Skrzypek M.S."/>
            <person name="Miyasato S.R."/>
            <person name="Simison M."/>
            <person name="Cherry J.M."/>
        </authorList>
    </citation>
    <scope>GENOME REANNOTATION</scope>
    <source>
        <strain>ATCC 204508 / S288c</strain>
    </source>
</reference>
<reference key="3">
    <citation type="journal article" date="2000" name="J. Bacteriol.">
        <title>Cloning and characterization of the CSF1 gene of Saccharomyces cerevisiae, which is required for nutrient uptake at low temperature.</title>
        <authorList>
            <person name="Tokai M."/>
            <person name="Kawasaki H."/>
            <person name="Kikuchi Y."/>
            <person name="Ouchi K."/>
        </authorList>
    </citation>
    <scope>FUNCTION</scope>
</reference>
<reference key="4">
    <citation type="journal article" date="2022" name="J. Cell Biol.">
        <title>Vps13-like proteins provide phosphatidylethanolamine for GPI anchor synthesis in the ER.</title>
        <authorList>
            <person name="Toulmay A."/>
            <person name="Whittle F.B."/>
            <person name="Yang J."/>
            <person name="Bai X."/>
            <person name="Diarra J."/>
            <person name="Banerjee S."/>
            <person name="Levine T.P."/>
            <person name="Golden A."/>
            <person name="Prinz W.A."/>
        </authorList>
    </citation>
    <scope>FUNCTION</scope>
    <scope>SUBCELLULAR LOCATION</scope>
    <scope>INTERACTION WITH MCD4</scope>
</reference>
<comment type="function">
    <text evidence="3 4">Tube-forming lipid transport protein which provides phosphatidylethanolamine for glycosylphosphatidylinositol (GPI) anchor synthesis in the endoplasmic reticulum (PubMed:35015055). Required for the glucose and other nutrients uptake at low temperature (PubMed:10781556).</text>
</comment>
<comment type="subunit">
    <text evidence="4">Interacts with MCD4; CSF1 channels phosphatidylethanolamine to MCD4 in the endoplasmic reticulum at contact sites to support GPI anchor biosynthesis.</text>
</comment>
<comment type="subcellular location">
    <subcellularLocation>
        <location evidence="4">Cell membrane</location>
        <topology evidence="1">Single-pass type II membrane protein</topology>
    </subcellularLocation>
    <subcellularLocation>
        <location evidence="4">Endoplasmic reticulum membrane</location>
        <topology evidence="1">Single-pass type II membrane protein</topology>
    </subcellularLocation>
    <subcellularLocation>
        <location evidence="4">Mitochondrion membrane</location>
        <topology evidence="1">Single-pass type II membrane protein</topology>
    </subcellularLocation>
    <text evidence="4">Localizes to endoplasmic reticulum-cell membrane and some endoplasmic reticulum-mitochondria contact sites.</text>
</comment>
<comment type="similarity">
    <text evidence="6">Belongs to the CSF1 family.</text>
</comment>
<evidence type="ECO:0000255" key="1"/>
<evidence type="ECO:0000256" key="2">
    <source>
        <dbReference type="SAM" id="MobiDB-lite"/>
    </source>
</evidence>
<evidence type="ECO:0000269" key="3">
    <source>
    </source>
</evidence>
<evidence type="ECO:0000269" key="4">
    <source>
    </source>
</evidence>
<evidence type="ECO:0000303" key="5">
    <source>
    </source>
</evidence>
<evidence type="ECO:0000305" key="6"/>
<evidence type="ECO:0000312" key="7">
    <source>
        <dbReference type="SGD" id="S000004077"/>
    </source>
</evidence>
<accession>Q12150</accession>
<accession>D6VY87</accession>
<protein>
    <recommendedName>
        <fullName evidence="6">Protein CSF1</fullName>
    </recommendedName>
    <alternativeName>
        <fullName evidence="6">Bridge-like lipid transfer protein family member 1</fullName>
        <shortName>BLTP1</shortName>
    </alternativeName>
    <alternativeName>
        <fullName>Cold sensitive for fermentation protein 1</fullName>
    </alternativeName>
</protein>
<sequence>MEAISQLRGVPLTHQKDFSWVFLVDWILTVVVCLTMIFYMGRIYAYLVSFILEWLLWKRAKIKINVETLRVSLLGGRIHFKNLSVIHKDYTISVLEGSLTWKYWLLNCRKAELIENNKSSSGKKAKLPCKISVECEGLEIFIYNRTVAYDNVINLLSKDERDKFEKYLNEHSFPEPFSDGSSADKLDEDLSESAYTTNSDASIVNDRDYQETDIGKHPKLLMFLPIELKFSRGSLLLGNKFTPSVMILSYESGKGIIDVLPPKERLDLYRNKTQMEFKNFEISIKQNIGYDDAIGLKFKIDRGKVSKLWKTFVRVFQIVTKPVVPKKTKKSAGTSDDNFYHKWKGLSLYKASAGDAKASDLDDVEFDLTNHEYAKFTSILKCPKVTIAYDVDVPGVVPHGAHPTIPDIDGPDVGNNGAPPDFALDVQIHGGSICYGPWAQRQVSHLQRVLSPVVSRTAKPIKKLPPGSRRIYTLFRMNISIMEDTTWRIPTRESSKDPEFLKHYKETNEEYRPFGWMDLRFCKDTYANFNISVCPTVQGFQNNFHVHFLETEIRSSVNHDILLKSKVFDIDGDIGYPLGWNSKAIWIINMKSEQLEAFLLREHITLVADTLSDFSAGDPTPYELFRPFVYKVNWEMEGYSIYLNVNDHNIVNNPLDFNENCYLSLHGDKLSIDVTVPRESILGTYTDMSYEISTPMFRMMLNTPPWNTLNEFMKHKEVGRAYDFTIKGSYLLYSELDIDNVDTLVIECNSKSTVLHCYGFVMRYLTNVKMNYFGEFFNFVTSEEYTGVLGAREVGDVTTKSSVADLASTVDSGYQNSSLKNESEDKGPMKRSDLKRTTNETDIWFTFSVWDGALILPETIYSFDPCIALHFAELVVDFRSCNYYMDIMAVLNGTSIKRHVSKQINEVFDFIRRNNGADEQEHGLLSDLTIHGHRMYGLPPTEPTYFCQWDINLGDLCIDSDIEFIKGFFNSFYKIGFGYNDLENILLYDTETINDMTSLTVHVEKIRIGLKDPVMKSQSVISAESILFTLIDFENEKYSQRIDVKIPKLTISLNCVMGDGVDTSFLKFETKLRFTNFEQYKDIDKKRSEQRRYITIHDSPYHRCPFLLPLFYQDSDTYQNLYGAIAPSSSIPTLPLPTLPDTIDYIIEDIVGEYATLLETTNPFKNIFAETPSTMEPSRASFSEDDNDEEADPSSFKPVAFTEDRNHERDNYVVDVSYILLDVDPLLFIFAKSLLEQLYSENMVQVLDDIEIGIVKRLSNLQEGITSISNIDIHIAYLNLIWQETGEEGFELYLDRIDYQMSEKSLEKNRTNKLLEVAALAKVKTVRVTVNQKKNPDLSEDRPPALSLGIEGFEVWSSTEDRQVNSLNLTSSDITIDESQMEWLFEYCSDQGNLIQEVCTSFNSIQNTRSNSKTELISKLTAASEYYQISHDPYVITKPAFIMRLSKGHVRENRSWKIITRLRHILTYLPDDWQSNIDEVLKEKKYTSAKDAKNIFMSVFSTWRNWEFSDVARSYIYGKLFTAENEKHKQNLIKKLLKCTMGSFYLTVYGEGYEVEHNFVVADANLVVDLTPPVTSLPSNREETIEITGRVGSVKGKFSDRLLKLQDLIPLIAAVGEDDKSDPKKELSKQFKMNTVLLVDKSELQLVMDQTKLMSRTVGGRVSLLWENLKDSTSQAGSLVIFSQKSEVWLKHTSVILGEAQLRDFSVLATTEAWSHKPTILINNQCADLHFRAMSSTEQLVTAITEIRESLMMIKERIKFKPKSKKKSQFVDQKINTVLSCYFSNVSSEVMPLSPFYIRHEAKQLDIYFNKFGSNEILLSIWDTDFFMTSHQTKEQYLRFSFGDIEIKGGISREGYSLINVDISISMIKLTFSEPRRIVNSFLQDEKLASQGINLLYSLKPLFFSSNLPKKEKQAPSIMINWTLDTSITYFGVLVPVASTYFVFELHMLLLSLTNTNNGMLPEETKVTGQFSIENILFLIKERSLPIGLSKLLDFSIKVSTLQRTVDTEQSFQVESSHFRVCLSPDSLLRLMWGAHKLLDLSHYYSRRHAPNIWNTKMFTGKSDKSKEMPINFRSIHILSYKFCIGWIFQYGAGSNPGLMLGYNRLFSAYEKDFGKFTVVDAFFSVANGNTSSTFFSEGNEKDKYNRSFLPNMQISYWFKRCGELKDWFFRFHGEALDVNFVPSFMDVIESTLQSMRAFQELKKNILDVSESLRAENDNSYASTSVESASSSLAPFLDNIRSVNSNFKYDGGVFRVYTYEDIETKSEPSFEIKSPVVTINCTYKHDEDKVKPHKFRTLITVDPTHNTLYAGCAPLLMEFSESLQKMIKKHSTDEKPNFTKPSSQNVDYKRLLDQFDVAVKLTSAKQQLSLSCEPKAKVQADVGFESFLFSMATNEFDSEQPLEFSLTLEHTKASIKHIFSREVSTSFEVGFMDLTLLFTHPDVISMYGTGLVSDLSVFFNVKQLQNLYLFLDIWRFSSILHTRPVQRTVNKEIEMSSLTSTNYADAGTEIPWCFTLIFTNVSGDVDLGPSLGMISLRTQRTWLATDHYNEKRQLLHAFTDGISLTSEGRLSGLFEVANASWLSEVKWPPEKSKNTHPLVSTSLNIDDIAVKAAFDYHMFLIGTISNIHFHLHNEKDAKGVLPDLLQVSFSSDEIILSSTALVVANILDIYNTIVRMRQDNKISYMETLRDSNPGESRQPILYKDILRSLKLLRTDLSVNISSSKVQISPISLFDVEVLVIRIDKVSIRSETHSGKKLKTDLQLQVLDVSAALSTSKEELDEEVGASIAIDDYMHYASKIVGGTIIDIPKLAVHMTTLQEEKTNNLEYLFACSFSDKISVRWNLGPVDFIKEMWTTHVKALAVRRSQVANISFGQTEEELEESIKKEEAASKFNYIALEEPQIEVPQIRDLGDATPPMEWFGVNRKKFPKFTHQTAVIPVQKLVYLAEKQYVKILDDTH</sequence>
<dbReference type="EMBL" id="U53880">
    <property type="protein sequence ID" value="AAB67591.1"/>
    <property type="molecule type" value="Genomic_DNA"/>
</dbReference>
<dbReference type="EMBL" id="Z73259">
    <property type="protein sequence ID" value="CAA97647.1"/>
    <property type="molecule type" value="Genomic_DNA"/>
</dbReference>
<dbReference type="EMBL" id="BK006945">
    <property type="protein sequence ID" value="DAA09403.1"/>
    <property type="molecule type" value="Genomic_DNA"/>
</dbReference>
<dbReference type="PIR" id="S64921">
    <property type="entry name" value="S64921"/>
</dbReference>
<dbReference type="RefSeq" id="NP_013188.1">
    <property type="nucleotide sequence ID" value="NM_001181974.1"/>
</dbReference>
<dbReference type="BioGRID" id="31360">
    <property type="interactions" value="600"/>
</dbReference>
<dbReference type="FunCoup" id="Q12150">
    <property type="interactions" value="94"/>
</dbReference>
<dbReference type="IntAct" id="Q12150">
    <property type="interactions" value="2"/>
</dbReference>
<dbReference type="MINT" id="Q12150"/>
<dbReference type="STRING" id="4932.YLR087C"/>
<dbReference type="TCDB" id="8.A.6.1.1">
    <property type="family name" value="the auxiliary nutrient transporter (ant) family"/>
</dbReference>
<dbReference type="GlyCosmos" id="Q12150">
    <property type="glycosylation" value="23 sites, No reported glycans"/>
</dbReference>
<dbReference type="GlyGen" id="Q12150">
    <property type="glycosylation" value="23 sites"/>
</dbReference>
<dbReference type="iPTMnet" id="Q12150"/>
<dbReference type="PaxDb" id="4932-YLR087C"/>
<dbReference type="PeptideAtlas" id="Q12150"/>
<dbReference type="EnsemblFungi" id="YLR087C_mRNA">
    <property type="protein sequence ID" value="YLR087C"/>
    <property type="gene ID" value="YLR087C"/>
</dbReference>
<dbReference type="GeneID" id="850776"/>
<dbReference type="KEGG" id="sce:YLR087C"/>
<dbReference type="AGR" id="SGD:S000004077"/>
<dbReference type="SGD" id="S000004077">
    <property type="gene designation" value="CSF1"/>
</dbReference>
<dbReference type="VEuPathDB" id="FungiDB:YLR087C"/>
<dbReference type="eggNOG" id="KOG3596">
    <property type="taxonomic scope" value="Eukaryota"/>
</dbReference>
<dbReference type="HOGENOM" id="CLU_000126_1_0_1"/>
<dbReference type="InParanoid" id="Q12150"/>
<dbReference type="OMA" id="YGLEWFI"/>
<dbReference type="OrthoDB" id="10051416at2759"/>
<dbReference type="BioCyc" id="YEAST:G3O-32238-MONOMER"/>
<dbReference type="BioGRID-ORCS" id="850776">
    <property type="hits" value="0 hits in 10 CRISPR screens"/>
</dbReference>
<dbReference type="PRO" id="PR:Q12150"/>
<dbReference type="Proteomes" id="UP000002311">
    <property type="component" value="Chromosome XII"/>
</dbReference>
<dbReference type="RNAct" id="Q12150">
    <property type="molecule type" value="protein"/>
</dbReference>
<dbReference type="GO" id="GO:0005789">
    <property type="term" value="C:endoplasmic reticulum membrane"/>
    <property type="evidence" value="ECO:0007669"/>
    <property type="project" value="UniProtKB-SubCell"/>
</dbReference>
<dbReference type="GO" id="GO:0140268">
    <property type="term" value="C:endoplasmic reticulum-plasma membrane contact site"/>
    <property type="evidence" value="ECO:0000314"/>
    <property type="project" value="UniProtKB"/>
</dbReference>
<dbReference type="GO" id="GO:0031966">
    <property type="term" value="C:mitochondrial membrane"/>
    <property type="evidence" value="ECO:0007669"/>
    <property type="project" value="UniProtKB-SubCell"/>
</dbReference>
<dbReference type="GO" id="GO:0005739">
    <property type="term" value="C:mitochondrion"/>
    <property type="evidence" value="ECO:0007005"/>
    <property type="project" value="SGD"/>
</dbReference>
<dbReference type="GO" id="GO:0005886">
    <property type="term" value="C:plasma membrane"/>
    <property type="evidence" value="ECO:0007669"/>
    <property type="project" value="UniProtKB-SubCell"/>
</dbReference>
<dbReference type="GO" id="GO:1904121">
    <property type="term" value="F:phosphatidylethanolamine transfer activity"/>
    <property type="evidence" value="ECO:0000314"/>
    <property type="project" value="UniProtKB"/>
</dbReference>
<dbReference type="GO" id="GO:0006113">
    <property type="term" value="P:fermentation"/>
    <property type="evidence" value="ECO:0000315"/>
    <property type="project" value="SGD"/>
</dbReference>
<dbReference type="GO" id="GO:0120009">
    <property type="term" value="P:intermembrane lipid transfer"/>
    <property type="evidence" value="ECO:0000314"/>
    <property type="project" value="UniProtKB"/>
</dbReference>
<dbReference type="GO" id="GO:0055091">
    <property type="term" value="P:phospholipid homeostasis"/>
    <property type="evidence" value="ECO:0000315"/>
    <property type="project" value="SGD"/>
</dbReference>
<dbReference type="GO" id="GO:0051604">
    <property type="term" value="P:protein maturation"/>
    <property type="evidence" value="ECO:0000315"/>
    <property type="project" value="SGD"/>
</dbReference>
<dbReference type="InterPro" id="IPR029636">
    <property type="entry name" value="Csf1"/>
</dbReference>
<dbReference type="InterPro" id="IPR056779">
    <property type="entry name" value="Csf1_C"/>
</dbReference>
<dbReference type="InterPro" id="IPR048636">
    <property type="entry name" value="Csf1_N"/>
</dbReference>
<dbReference type="PANTHER" id="PTHR32085">
    <property type="entry name" value="PROTEIN CSF1"/>
    <property type="match status" value="1"/>
</dbReference>
<dbReference type="PANTHER" id="PTHR32085:SF3">
    <property type="entry name" value="PROTEIN CSF1"/>
    <property type="match status" value="1"/>
</dbReference>
<dbReference type="Pfam" id="PF25038">
    <property type="entry name" value="Csf1_C"/>
    <property type="match status" value="1"/>
</dbReference>
<dbReference type="Pfam" id="PF21678">
    <property type="entry name" value="Csf1_N"/>
    <property type="match status" value="1"/>
</dbReference>
<name>CSF1_YEAST</name>
<gene>
    <name evidence="7" type="primary">CSF1</name>
    <name evidence="5" type="synonym">TWEEK</name>
    <name type="ordered locus">YLR087C</name>
</gene>
<feature type="chain" id="PRO_0000228143" description="Protein CSF1">
    <location>
        <begin position="1"/>
        <end position="2958"/>
    </location>
</feature>
<feature type="topological domain" description="Cytoplasmic" evidence="1">
    <location>
        <begin position="1"/>
        <end position="17"/>
    </location>
</feature>
<feature type="transmembrane region" description="Helical; Signal-anchor for type II membrane protein" evidence="1">
    <location>
        <begin position="18"/>
        <end position="38"/>
    </location>
</feature>
<feature type="topological domain" description="Extracellular" evidence="1">
    <location>
        <begin position="39"/>
        <end position="2958"/>
    </location>
</feature>
<feature type="region of interest" description="Disordered" evidence="2">
    <location>
        <begin position="813"/>
        <end position="834"/>
    </location>
</feature>
<feature type="region of interest" description="Disordered" evidence="2">
    <location>
        <begin position="1175"/>
        <end position="1196"/>
    </location>
</feature>
<feature type="compositionally biased region" description="Basic and acidic residues" evidence="2">
    <location>
        <begin position="821"/>
        <end position="834"/>
    </location>
</feature>
<feature type="compositionally biased region" description="Acidic residues" evidence="2">
    <location>
        <begin position="1183"/>
        <end position="1192"/>
    </location>
</feature>
<feature type="glycosylation site" description="N-linked (GlcNAc...) asparagine" evidence="1">
    <location>
        <position position="82"/>
    </location>
</feature>
<feature type="glycosylation site" description="N-linked (GlcNAc...) asparagine" evidence="1">
    <location>
        <position position="117"/>
    </location>
</feature>
<feature type="glycosylation site" description="N-linked (GlcNAc...) asparagine" evidence="1">
    <location>
        <position position="144"/>
    </location>
</feature>
<feature type="glycosylation site" description="N-linked (GlcNAc...) asparagine" evidence="1">
    <location>
        <position position="271"/>
    </location>
</feature>
<feature type="glycosylation site" description="N-linked (GlcNAc...) asparagine" evidence="1">
    <location>
        <position position="478"/>
    </location>
</feature>
<feature type="glycosylation site" description="N-linked (GlcNAc...) asparagine" evidence="1">
    <location>
        <position position="530"/>
    </location>
</feature>
<feature type="glycosylation site" description="N-linked (GlcNAc...) asparagine" evidence="1">
    <location>
        <position position="816"/>
    </location>
</feature>
<feature type="glycosylation site" description="N-linked (GlcNAc...) asparagine" evidence="1">
    <location>
        <position position="821"/>
    </location>
</feature>
<feature type="glycosylation site" description="N-linked (GlcNAc...) asparagine" evidence="1">
    <location>
        <position position="839"/>
    </location>
</feature>
<feature type="glycosylation site" description="N-linked (GlcNAc...) asparagine" evidence="1">
    <location>
        <position position="892"/>
    </location>
</feature>
<feature type="glycosylation site" description="N-linked (GlcNAc...) asparagine" evidence="1">
    <location>
        <position position="1309"/>
    </location>
</feature>
<feature type="glycosylation site" description="N-linked (GlcNAc...) asparagine" evidence="1">
    <location>
        <position position="1368"/>
    </location>
</feature>
<feature type="glycosylation site" description="N-linked (GlcNAc...) asparagine" evidence="1">
    <location>
        <position position="1453"/>
    </location>
</feature>
<feature type="glycosylation site" description="N-linked (GlcNAc...) asparagine" evidence="1">
    <location>
        <position position="1785"/>
    </location>
</feature>
<feature type="glycosylation site" description="N-linked (GlcNAc...) asparagine" evidence="1">
    <location>
        <position position="1921"/>
    </location>
</feature>
<feature type="glycosylation site" description="N-linked (GlcNAc...) asparagine" evidence="1">
    <location>
        <position position="2130"/>
    </location>
</feature>
<feature type="glycosylation site" description="N-linked (GlcNAc...) asparagine" evidence="1">
    <location>
        <position position="2146"/>
    </location>
</feature>
<feature type="glycosylation site" description="N-linked (GlcNAc...) asparagine" evidence="1">
    <location>
        <position position="2280"/>
    </location>
</feature>
<feature type="glycosylation site" description="N-linked (GlcNAc...) asparagine" evidence="1">
    <location>
        <position position="2337"/>
    </location>
</feature>
<feature type="glycosylation site" description="N-linked (GlcNAc...) asparagine" evidence="1">
    <location>
        <position position="2520"/>
    </location>
</feature>
<feature type="glycosylation site" description="N-linked (GlcNAc...) asparagine" evidence="1">
    <location>
        <position position="2578"/>
    </location>
</feature>
<feature type="glycosylation site" description="N-linked (GlcNAc...) asparagine" evidence="1">
    <location>
        <position position="2719"/>
    </location>
</feature>
<feature type="glycosylation site" description="N-linked (GlcNAc...) asparagine" evidence="1">
    <location>
        <position position="2869"/>
    </location>
</feature>
<proteinExistence type="evidence at protein level"/>